<feature type="chain" id="PRO_1000143750" description="Large ribosomal subunit protein bL21">
    <location>
        <begin position="1"/>
        <end position="103"/>
    </location>
</feature>
<gene>
    <name evidence="1" type="primary">rplU</name>
    <name type="ordered locus">Aasi_0107</name>
</gene>
<protein>
    <recommendedName>
        <fullName evidence="1">Large ribosomal subunit protein bL21</fullName>
    </recommendedName>
    <alternativeName>
        <fullName evidence="2">50S ribosomal protein L21</fullName>
    </alternativeName>
</protein>
<accession>B3EUD6</accession>
<evidence type="ECO:0000255" key="1">
    <source>
        <dbReference type="HAMAP-Rule" id="MF_01363"/>
    </source>
</evidence>
<evidence type="ECO:0000305" key="2"/>
<sequence>MYAIVEIAGKQFKVTKDLYIYTPKMDQEAGSSVSFDKILLLQNDQDIQVGDPTVAGAKIEGKVIEHVKGDKIIVFKRKRRKGYKTKQGHRQGYTKVLIQNILR</sequence>
<reference key="1">
    <citation type="journal article" date="2010" name="J. Bacteriol.">
        <title>The genome of the amoeba symbiont 'Candidatus Amoebophilus asiaticus' reveals common mechanisms for host cell interaction among amoeba-associated bacteria.</title>
        <authorList>
            <person name="Schmitz-Esser S."/>
            <person name="Tischler P."/>
            <person name="Arnold R."/>
            <person name="Montanaro J."/>
            <person name="Wagner M."/>
            <person name="Rattei T."/>
            <person name="Horn M."/>
        </authorList>
    </citation>
    <scope>NUCLEOTIDE SEQUENCE [LARGE SCALE GENOMIC DNA]</scope>
    <source>
        <strain>5a2</strain>
    </source>
</reference>
<comment type="function">
    <text evidence="1">This protein binds to 23S rRNA in the presence of protein L20.</text>
</comment>
<comment type="subunit">
    <text evidence="1">Part of the 50S ribosomal subunit. Contacts protein L20.</text>
</comment>
<comment type="similarity">
    <text evidence="1">Belongs to the bacterial ribosomal protein bL21 family.</text>
</comment>
<proteinExistence type="inferred from homology"/>
<name>RL21_AMOA5</name>
<dbReference type="EMBL" id="CP001102">
    <property type="protein sequence ID" value="ACE05555.1"/>
    <property type="molecule type" value="Genomic_DNA"/>
</dbReference>
<dbReference type="RefSeq" id="WP_012472325.1">
    <property type="nucleotide sequence ID" value="NC_010830.1"/>
</dbReference>
<dbReference type="SMR" id="B3EUD6"/>
<dbReference type="STRING" id="452471.Aasi_0107"/>
<dbReference type="KEGG" id="aas:Aasi_0107"/>
<dbReference type="eggNOG" id="COG0261">
    <property type="taxonomic scope" value="Bacteria"/>
</dbReference>
<dbReference type="HOGENOM" id="CLU_061463_3_2_10"/>
<dbReference type="OrthoDB" id="9813334at2"/>
<dbReference type="Proteomes" id="UP000001227">
    <property type="component" value="Chromosome"/>
</dbReference>
<dbReference type="GO" id="GO:0005737">
    <property type="term" value="C:cytoplasm"/>
    <property type="evidence" value="ECO:0007669"/>
    <property type="project" value="UniProtKB-ARBA"/>
</dbReference>
<dbReference type="GO" id="GO:1990904">
    <property type="term" value="C:ribonucleoprotein complex"/>
    <property type="evidence" value="ECO:0007669"/>
    <property type="project" value="UniProtKB-KW"/>
</dbReference>
<dbReference type="GO" id="GO:0005840">
    <property type="term" value="C:ribosome"/>
    <property type="evidence" value="ECO:0007669"/>
    <property type="project" value="UniProtKB-KW"/>
</dbReference>
<dbReference type="GO" id="GO:0019843">
    <property type="term" value="F:rRNA binding"/>
    <property type="evidence" value="ECO:0007669"/>
    <property type="project" value="UniProtKB-UniRule"/>
</dbReference>
<dbReference type="GO" id="GO:0003735">
    <property type="term" value="F:structural constituent of ribosome"/>
    <property type="evidence" value="ECO:0007669"/>
    <property type="project" value="InterPro"/>
</dbReference>
<dbReference type="GO" id="GO:0006412">
    <property type="term" value="P:translation"/>
    <property type="evidence" value="ECO:0007669"/>
    <property type="project" value="UniProtKB-UniRule"/>
</dbReference>
<dbReference type="HAMAP" id="MF_01363">
    <property type="entry name" value="Ribosomal_bL21"/>
    <property type="match status" value="1"/>
</dbReference>
<dbReference type="InterPro" id="IPR028909">
    <property type="entry name" value="bL21-like"/>
</dbReference>
<dbReference type="InterPro" id="IPR036164">
    <property type="entry name" value="bL21-like_sf"/>
</dbReference>
<dbReference type="InterPro" id="IPR001787">
    <property type="entry name" value="Ribosomal_bL21"/>
</dbReference>
<dbReference type="InterPro" id="IPR018258">
    <property type="entry name" value="Ribosomal_bL21_CS"/>
</dbReference>
<dbReference type="NCBIfam" id="TIGR00061">
    <property type="entry name" value="L21"/>
    <property type="match status" value="1"/>
</dbReference>
<dbReference type="PANTHER" id="PTHR21349">
    <property type="entry name" value="50S RIBOSOMAL PROTEIN L21"/>
    <property type="match status" value="1"/>
</dbReference>
<dbReference type="PANTHER" id="PTHR21349:SF0">
    <property type="entry name" value="LARGE RIBOSOMAL SUBUNIT PROTEIN BL21M"/>
    <property type="match status" value="1"/>
</dbReference>
<dbReference type="Pfam" id="PF00829">
    <property type="entry name" value="Ribosomal_L21p"/>
    <property type="match status" value="1"/>
</dbReference>
<dbReference type="SUPFAM" id="SSF141091">
    <property type="entry name" value="L21p-like"/>
    <property type="match status" value="1"/>
</dbReference>
<dbReference type="PROSITE" id="PS01169">
    <property type="entry name" value="RIBOSOMAL_L21"/>
    <property type="match status" value="1"/>
</dbReference>
<organism>
    <name type="scientific">Amoebophilus asiaticus (strain 5a2)</name>
    <dbReference type="NCBI Taxonomy" id="452471"/>
    <lineage>
        <taxon>Bacteria</taxon>
        <taxon>Pseudomonadati</taxon>
        <taxon>Bacteroidota</taxon>
        <taxon>Cytophagia</taxon>
        <taxon>Cytophagales</taxon>
        <taxon>Amoebophilaceae</taxon>
        <taxon>Candidatus Amoebophilus</taxon>
    </lineage>
</organism>
<keyword id="KW-1185">Reference proteome</keyword>
<keyword id="KW-0687">Ribonucleoprotein</keyword>
<keyword id="KW-0689">Ribosomal protein</keyword>
<keyword id="KW-0694">RNA-binding</keyword>
<keyword id="KW-0699">rRNA-binding</keyword>